<sequence length="101" mass="11431">MAGQKIRIRLKAYDHEAIDASARKIVETVVRTGASVVGPVPLPTEKNVYCVIRSPHKYKDSREHFEMRTHKRLIDILDPTPKTVDALMRIDLPASVDVNIQ</sequence>
<comment type="function">
    <text evidence="1">Involved in the binding of tRNA to the ribosomes.</text>
</comment>
<comment type="subunit">
    <text evidence="1">Part of the 30S ribosomal subunit.</text>
</comment>
<comment type="similarity">
    <text evidence="1">Belongs to the universal ribosomal protein uS10 family.</text>
</comment>
<organism>
    <name type="scientific">Mycolicibacterium paratuberculosis (strain ATCC BAA-968 / K-10)</name>
    <name type="common">Mycobacterium paratuberculosis</name>
    <dbReference type="NCBI Taxonomy" id="262316"/>
    <lineage>
        <taxon>Bacteria</taxon>
        <taxon>Bacillati</taxon>
        <taxon>Actinomycetota</taxon>
        <taxon>Actinomycetes</taxon>
        <taxon>Mycobacteriales</taxon>
        <taxon>Mycobacteriaceae</taxon>
        <taxon>Mycobacterium</taxon>
        <taxon>Mycobacterium avium complex (MAC)</taxon>
    </lineage>
</organism>
<proteinExistence type="inferred from homology"/>
<name>RS10_MYCPA</name>
<dbReference type="EMBL" id="AE016958">
    <property type="protein sequence ID" value="AAS06710.1"/>
    <property type="molecule type" value="Genomic_DNA"/>
</dbReference>
<dbReference type="RefSeq" id="WP_003873519.1">
    <property type="nucleotide sequence ID" value="NZ_CP106873.1"/>
</dbReference>
<dbReference type="SMR" id="Q73SB4"/>
<dbReference type="STRING" id="262316.MAP_4160"/>
<dbReference type="GeneID" id="97439279"/>
<dbReference type="KEGG" id="mpa:MAP_4160"/>
<dbReference type="eggNOG" id="COG0051">
    <property type="taxonomic scope" value="Bacteria"/>
</dbReference>
<dbReference type="HOGENOM" id="CLU_122625_1_3_11"/>
<dbReference type="Proteomes" id="UP000000580">
    <property type="component" value="Chromosome"/>
</dbReference>
<dbReference type="GO" id="GO:1990904">
    <property type="term" value="C:ribonucleoprotein complex"/>
    <property type="evidence" value="ECO:0007669"/>
    <property type="project" value="UniProtKB-KW"/>
</dbReference>
<dbReference type="GO" id="GO:0005840">
    <property type="term" value="C:ribosome"/>
    <property type="evidence" value="ECO:0007669"/>
    <property type="project" value="UniProtKB-KW"/>
</dbReference>
<dbReference type="GO" id="GO:0003735">
    <property type="term" value="F:structural constituent of ribosome"/>
    <property type="evidence" value="ECO:0007669"/>
    <property type="project" value="InterPro"/>
</dbReference>
<dbReference type="GO" id="GO:0000049">
    <property type="term" value="F:tRNA binding"/>
    <property type="evidence" value="ECO:0007669"/>
    <property type="project" value="UniProtKB-UniRule"/>
</dbReference>
<dbReference type="GO" id="GO:0006412">
    <property type="term" value="P:translation"/>
    <property type="evidence" value="ECO:0007669"/>
    <property type="project" value="UniProtKB-UniRule"/>
</dbReference>
<dbReference type="FunFam" id="3.30.70.600:FF:000001">
    <property type="entry name" value="30S ribosomal protein S10"/>
    <property type="match status" value="1"/>
</dbReference>
<dbReference type="Gene3D" id="3.30.70.600">
    <property type="entry name" value="Ribosomal protein S10 domain"/>
    <property type="match status" value="1"/>
</dbReference>
<dbReference type="HAMAP" id="MF_00508">
    <property type="entry name" value="Ribosomal_uS10"/>
    <property type="match status" value="1"/>
</dbReference>
<dbReference type="InterPro" id="IPR001848">
    <property type="entry name" value="Ribosomal_uS10"/>
</dbReference>
<dbReference type="InterPro" id="IPR018268">
    <property type="entry name" value="Ribosomal_uS10_CS"/>
</dbReference>
<dbReference type="InterPro" id="IPR027486">
    <property type="entry name" value="Ribosomal_uS10_dom"/>
</dbReference>
<dbReference type="InterPro" id="IPR036838">
    <property type="entry name" value="Ribosomal_uS10_dom_sf"/>
</dbReference>
<dbReference type="NCBIfam" id="NF001861">
    <property type="entry name" value="PRK00596.1"/>
    <property type="match status" value="1"/>
</dbReference>
<dbReference type="NCBIfam" id="TIGR01049">
    <property type="entry name" value="rpsJ_bact"/>
    <property type="match status" value="1"/>
</dbReference>
<dbReference type="PANTHER" id="PTHR11700">
    <property type="entry name" value="30S RIBOSOMAL PROTEIN S10 FAMILY MEMBER"/>
    <property type="match status" value="1"/>
</dbReference>
<dbReference type="Pfam" id="PF00338">
    <property type="entry name" value="Ribosomal_S10"/>
    <property type="match status" value="1"/>
</dbReference>
<dbReference type="PRINTS" id="PR00971">
    <property type="entry name" value="RIBOSOMALS10"/>
</dbReference>
<dbReference type="SMART" id="SM01403">
    <property type="entry name" value="Ribosomal_S10"/>
    <property type="match status" value="1"/>
</dbReference>
<dbReference type="SUPFAM" id="SSF54999">
    <property type="entry name" value="Ribosomal protein S10"/>
    <property type="match status" value="1"/>
</dbReference>
<dbReference type="PROSITE" id="PS00361">
    <property type="entry name" value="RIBOSOMAL_S10"/>
    <property type="match status" value="1"/>
</dbReference>
<feature type="chain" id="PRO_0000146556" description="Small ribosomal subunit protein uS10">
    <location>
        <begin position="1"/>
        <end position="101"/>
    </location>
</feature>
<evidence type="ECO:0000255" key="1">
    <source>
        <dbReference type="HAMAP-Rule" id="MF_00508"/>
    </source>
</evidence>
<evidence type="ECO:0000305" key="2"/>
<protein>
    <recommendedName>
        <fullName evidence="1">Small ribosomal subunit protein uS10</fullName>
    </recommendedName>
    <alternativeName>
        <fullName evidence="2">30S ribosomal protein S10</fullName>
    </alternativeName>
</protein>
<accession>Q73SB4</accession>
<gene>
    <name evidence="1" type="primary">rpsJ</name>
    <name type="ordered locus">MAP_4160</name>
</gene>
<reference key="1">
    <citation type="journal article" date="2005" name="Proc. Natl. Acad. Sci. U.S.A.">
        <title>The complete genome sequence of Mycobacterium avium subspecies paratuberculosis.</title>
        <authorList>
            <person name="Li L."/>
            <person name="Bannantine J.P."/>
            <person name="Zhang Q."/>
            <person name="Amonsin A."/>
            <person name="May B.J."/>
            <person name="Alt D."/>
            <person name="Banerji N."/>
            <person name="Kanjilal S."/>
            <person name="Kapur V."/>
        </authorList>
    </citation>
    <scope>NUCLEOTIDE SEQUENCE [LARGE SCALE GENOMIC DNA]</scope>
    <source>
        <strain>ATCC BAA-968 / K-10</strain>
    </source>
</reference>
<keyword id="KW-1185">Reference proteome</keyword>
<keyword id="KW-0687">Ribonucleoprotein</keyword>
<keyword id="KW-0689">Ribosomal protein</keyword>